<protein>
    <recommendedName>
        <fullName evidence="1">Protein translocase subunit SecA</fullName>
        <ecNumber evidence="1">7.4.2.8</ecNumber>
    </recommendedName>
</protein>
<sequence>MLIKLLTKVFGSRNDRTLRRMRKVVDVINRMEPEFEKLSDDELKGKTAEFRARLEKGESLENLLPEAFATVREASKRVFAMRHFDVQLLGGMVLNERCIAEMRTGEGKTLTATLPAYLNALTGRGVHVVTVNDYLAQRDAENNRPLFEFLGLSVGINLPGMPAPVKRQAYAADITYGTNNEYGFDYLRDNMAFSPEERVQRKLHYALVDEVDSILIDEARTPLIISGPAEDSSELYIKVNKLIPKLIRQEKEDSETFQGEGHFSVDEKSRQVNLTERGLVLIEQLLSEASLMEEGESLYSPTNIMLMHHVTAALRAHALFTRDVDYIVKDGEVIIVDEHTGRTMQGRRWSDGLHQAVEAKEGVEIQNENQTLASITFQNYFRLYEKLAGMTGTADTEAFEFSSIYKLDTIVVPTNRPMIRNDLPDLVYMTEAEKIEAIIEDIRERTGKGQPVLVGTISIEKSELVSRELTNAGIEHNVLNAKFHAMEADIIAQAGQASAVTIATNMAGRGTDIVLGGSWQAEIAKLTEPTEAQIEEIKAAWQERHDRVLAAGGLHIIGTERHESRRIDNQLRGRSGRQGDAGSSRFYLSMEDSLMRIFASDRVTSMMRKLGMKPGEAIEHPWVTKAIANAQRKVESRNFDIRKQLLEYDDVANDQRRAIYAQRNDLLDVSDVSETIGSIREDVFKATIDAYIPPQSLEEMWDVEGLQQRLVTDFDLELPIKEWLDKEPELHEETLRERILEQAVEVYKRKEEIVGIEMMRNFEKGIMLQTLDMLWKEHLAAMDYLRQGIHLRGYAQKDPKQEYKRESFAMFASMLESLKYEVISTLSKVQVRLPEEVEALEQQRRAEAERLAKQQQLSHEVEKGALMSTTEAQIASGARKVGRNDPCPCGSGKKYKHCHGRLQ</sequence>
<evidence type="ECO:0000255" key="1">
    <source>
        <dbReference type="HAMAP-Rule" id="MF_01382"/>
    </source>
</evidence>
<reference key="1">
    <citation type="journal article" date="2003" name="Nat. Biotechnol.">
        <title>The genome sequence of the entomopathogenic bacterium Photorhabdus luminescens.</title>
        <authorList>
            <person name="Duchaud E."/>
            <person name="Rusniok C."/>
            <person name="Frangeul L."/>
            <person name="Buchrieser C."/>
            <person name="Givaudan A."/>
            <person name="Taourit S."/>
            <person name="Bocs S."/>
            <person name="Boursaux-Eude C."/>
            <person name="Chandler M."/>
            <person name="Charles J.-F."/>
            <person name="Dassa E."/>
            <person name="Derose R."/>
            <person name="Derzelle S."/>
            <person name="Freyssinet G."/>
            <person name="Gaudriault S."/>
            <person name="Medigue C."/>
            <person name="Lanois A."/>
            <person name="Powell K."/>
            <person name="Siguier P."/>
            <person name="Vincent R."/>
            <person name="Wingate V."/>
            <person name="Zouine M."/>
            <person name="Glaser P."/>
            <person name="Boemare N."/>
            <person name="Danchin A."/>
            <person name="Kunst F."/>
        </authorList>
    </citation>
    <scope>NUCLEOTIDE SEQUENCE [LARGE SCALE GENOMIC DNA]</scope>
    <source>
        <strain>DSM 15139 / CIP 105565 / TT01</strain>
    </source>
</reference>
<keyword id="KW-0067">ATP-binding</keyword>
<keyword id="KW-0997">Cell inner membrane</keyword>
<keyword id="KW-1003">Cell membrane</keyword>
<keyword id="KW-0963">Cytoplasm</keyword>
<keyword id="KW-0472">Membrane</keyword>
<keyword id="KW-0479">Metal-binding</keyword>
<keyword id="KW-0547">Nucleotide-binding</keyword>
<keyword id="KW-0653">Protein transport</keyword>
<keyword id="KW-1185">Reference proteome</keyword>
<keyword id="KW-1278">Translocase</keyword>
<keyword id="KW-0811">Translocation</keyword>
<keyword id="KW-0813">Transport</keyword>
<keyword id="KW-0862">Zinc</keyword>
<gene>
    <name evidence="1" type="primary">secA</name>
    <name type="ordered locus">plu3645</name>
</gene>
<dbReference type="EC" id="7.4.2.8" evidence="1"/>
<dbReference type="EMBL" id="BX571871">
    <property type="protein sequence ID" value="CAE16018.1"/>
    <property type="molecule type" value="Genomic_DNA"/>
</dbReference>
<dbReference type="RefSeq" id="WP_011147808.1">
    <property type="nucleotide sequence ID" value="NC_005126.1"/>
</dbReference>
<dbReference type="SMR" id="Q7N156"/>
<dbReference type="STRING" id="243265.plu3645"/>
<dbReference type="GeneID" id="48849888"/>
<dbReference type="KEGG" id="plu:plu3645"/>
<dbReference type="eggNOG" id="COG0653">
    <property type="taxonomic scope" value="Bacteria"/>
</dbReference>
<dbReference type="HOGENOM" id="CLU_005314_3_0_6"/>
<dbReference type="OrthoDB" id="9805579at2"/>
<dbReference type="Proteomes" id="UP000002514">
    <property type="component" value="Chromosome"/>
</dbReference>
<dbReference type="GO" id="GO:0031522">
    <property type="term" value="C:cell envelope Sec protein transport complex"/>
    <property type="evidence" value="ECO:0007669"/>
    <property type="project" value="TreeGrafter"/>
</dbReference>
<dbReference type="GO" id="GO:0005829">
    <property type="term" value="C:cytosol"/>
    <property type="evidence" value="ECO:0007669"/>
    <property type="project" value="TreeGrafter"/>
</dbReference>
<dbReference type="GO" id="GO:0005886">
    <property type="term" value="C:plasma membrane"/>
    <property type="evidence" value="ECO:0007669"/>
    <property type="project" value="UniProtKB-SubCell"/>
</dbReference>
<dbReference type="GO" id="GO:0005524">
    <property type="term" value="F:ATP binding"/>
    <property type="evidence" value="ECO:0007669"/>
    <property type="project" value="UniProtKB-UniRule"/>
</dbReference>
<dbReference type="GO" id="GO:0046872">
    <property type="term" value="F:metal ion binding"/>
    <property type="evidence" value="ECO:0007669"/>
    <property type="project" value="UniProtKB-KW"/>
</dbReference>
<dbReference type="GO" id="GO:0008564">
    <property type="term" value="F:protein-exporting ATPase activity"/>
    <property type="evidence" value="ECO:0007669"/>
    <property type="project" value="UniProtKB-EC"/>
</dbReference>
<dbReference type="GO" id="GO:0065002">
    <property type="term" value="P:intracellular protein transmembrane transport"/>
    <property type="evidence" value="ECO:0007669"/>
    <property type="project" value="UniProtKB-UniRule"/>
</dbReference>
<dbReference type="GO" id="GO:0017038">
    <property type="term" value="P:protein import"/>
    <property type="evidence" value="ECO:0007669"/>
    <property type="project" value="InterPro"/>
</dbReference>
<dbReference type="GO" id="GO:0006605">
    <property type="term" value="P:protein targeting"/>
    <property type="evidence" value="ECO:0007669"/>
    <property type="project" value="UniProtKB-UniRule"/>
</dbReference>
<dbReference type="GO" id="GO:0043952">
    <property type="term" value="P:protein transport by the Sec complex"/>
    <property type="evidence" value="ECO:0007669"/>
    <property type="project" value="TreeGrafter"/>
</dbReference>
<dbReference type="CDD" id="cd17928">
    <property type="entry name" value="DEXDc_SecA"/>
    <property type="match status" value="1"/>
</dbReference>
<dbReference type="CDD" id="cd18803">
    <property type="entry name" value="SF2_C_secA"/>
    <property type="match status" value="1"/>
</dbReference>
<dbReference type="FunFam" id="1.10.3060.10:FF:000001">
    <property type="entry name" value="Preprotein translocase subunit SecA"/>
    <property type="match status" value="1"/>
</dbReference>
<dbReference type="FunFam" id="3.40.50.300:FF:000081">
    <property type="entry name" value="Preprotein translocase subunit SecA"/>
    <property type="match status" value="1"/>
</dbReference>
<dbReference type="FunFam" id="3.40.50.300:FF:000113">
    <property type="entry name" value="Preprotein translocase subunit SecA"/>
    <property type="match status" value="1"/>
</dbReference>
<dbReference type="FunFam" id="3.90.1440.10:FF:000001">
    <property type="entry name" value="Preprotein translocase subunit SecA"/>
    <property type="match status" value="1"/>
</dbReference>
<dbReference type="Gene3D" id="1.10.3060.10">
    <property type="entry name" value="Helical scaffold and wing domains of SecA"/>
    <property type="match status" value="1"/>
</dbReference>
<dbReference type="Gene3D" id="3.40.50.300">
    <property type="entry name" value="P-loop containing nucleotide triphosphate hydrolases"/>
    <property type="match status" value="2"/>
</dbReference>
<dbReference type="Gene3D" id="3.90.1440.10">
    <property type="entry name" value="SecA, preprotein cross-linking domain"/>
    <property type="match status" value="1"/>
</dbReference>
<dbReference type="HAMAP" id="MF_01382">
    <property type="entry name" value="SecA"/>
    <property type="match status" value="1"/>
</dbReference>
<dbReference type="InterPro" id="IPR014001">
    <property type="entry name" value="Helicase_ATP-bd"/>
</dbReference>
<dbReference type="InterPro" id="IPR001650">
    <property type="entry name" value="Helicase_C-like"/>
</dbReference>
<dbReference type="InterPro" id="IPR027417">
    <property type="entry name" value="P-loop_NTPase"/>
</dbReference>
<dbReference type="InterPro" id="IPR004027">
    <property type="entry name" value="SEC_C_motif"/>
</dbReference>
<dbReference type="InterPro" id="IPR000185">
    <property type="entry name" value="SecA"/>
</dbReference>
<dbReference type="InterPro" id="IPR020937">
    <property type="entry name" value="SecA_CS"/>
</dbReference>
<dbReference type="InterPro" id="IPR011115">
    <property type="entry name" value="SecA_DEAD"/>
</dbReference>
<dbReference type="InterPro" id="IPR014018">
    <property type="entry name" value="SecA_motor_DEAD"/>
</dbReference>
<dbReference type="InterPro" id="IPR011130">
    <property type="entry name" value="SecA_preprotein_X-link_dom"/>
</dbReference>
<dbReference type="InterPro" id="IPR044722">
    <property type="entry name" value="SecA_SF2_C"/>
</dbReference>
<dbReference type="InterPro" id="IPR011116">
    <property type="entry name" value="SecA_Wing/Scaffold"/>
</dbReference>
<dbReference type="InterPro" id="IPR036266">
    <property type="entry name" value="SecA_Wing/Scaffold_sf"/>
</dbReference>
<dbReference type="InterPro" id="IPR036670">
    <property type="entry name" value="SecA_X-link_sf"/>
</dbReference>
<dbReference type="NCBIfam" id="NF009538">
    <property type="entry name" value="PRK12904.1"/>
    <property type="match status" value="1"/>
</dbReference>
<dbReference type="NCBIfam" id="TIGR00963">
    <property type="entry name" value="secA"/>
    <property type="match status" value="1"/>
</dbReference>
<dbReference type="PANTHER" id="PTHR30612:SF0">
    <property type="entry name" value="CHLOROPLAST PROTEIN-TRANSPORTING ATPASE"/>
    <property type="match status" value="1"/>
</dbReference>
<dbReference type="PANTHER" id="PTHR30612">
    <property type="entry name" value="SECA INNER MEMBRANE COMPONENT OF SEC PROTEIN SECRETION SYSTEM"/>
    <property type="match status" value="1"/>
</dbReference>
<dbReference type="Pfam" id="PF21090">
    <property type="entry name" value="P-loop_SecA"/>
    <property type="match status" value="1"/>
</dbReference>
<dbReference type="Pfam" id="PF02810">
    <property type="entry name" value="SEC-C"/>
    <property type="match status" value="1"/>
</dbReference>
<dbReference type="Pfam" id="PF07517">
    <property type="entry name" value="SecA_DEAD"/>
    <property type="match status" value="1"/>
</dbReference>
<dbReference type="Pfam" id="PF01043">
    <property type="entry name" value="SecA_PP_bind"/>
    <property type="match status" value="1"/>
</dbReference>
<dbReference type="Pfam" id="PF07516">
    <property type="entry name" value="SecA_SW"/>
    <property type="match status" value="1"/>
</dbReference>
<dbReference type="PRINTS" id="PR00906">
    <property type="entry name" value="SECA"/>
</dbReference>
<dbReference type="SMART" id="SM00957">
    <property type="entry name" value="SecA_DEAD"/>
    <property type="match status" value="1"/>
</dbReference>
<dbReference type="SMART" id="SM00958">
    <property type="entry name" value="SecA_PP_bind"/>
    <property type="match status" value="1"/>
</dbReference>
<dbReference type="SUPFAM" id="SSF81886">
    <property type="entry name" value="Helical scaffold and wing domains of SecA"/>
    <property type="match status" value="1"/>
</dbReference>
<dbReference type="SUPFAM" id="SSF52540">
    <property type="entry name" value="P-loop containing nucleoside triphosphate hydrolases"/>
    <property type="match status" value="2"/>
</dbReference>
<dbReference type="SUPFAM" id="SSF81767">
    <property type="entry name" value="Pre-protein crosslinking domain of SecA"/>
    <property type="match status" value="1"/>
</dbReference>
<dbReference type="PROSITE" id="PS01312">
    <property type="entry name" value="SECA"/>
    <property type="match status" value="1"/>
</dbReference>
<dbReference type="PROSITE" id="PS51196">
    <property type="entry name" value="SECA_MOTOR_DEAD"/>
    <property type="match status" value="1"/>
</dbReference>
<feature type="chain" id="PRO_0000320887" description="Protein translocase subunit SecA">
    <location>
        <begin position="1"/>
        <end position="903"/>
    </location>
</feature>
<feature type="binding site" evidence="1">
    <location>
        <position position="87"/>
    </location>
    <ligand>
        <name>ATP</name>
        <dbReference type="ChEBI" id="CHEBI:30616"/>
    </ligand>
</feature>
<feature type="binding site" evidence="1">
    <location>
        <begin position="105"/>
        <end position="109"/>
    </location>
    <ligand>
        <name>ATP</name>
        <dbReference type="ChEBI" id="CHEBI:30616"/>
    </ligand>
</feature>
<feature type="binding site" evidence="1">
    <location>
        <position position="512"/>
    </location>
    <ligand>
        <name>ATP</name>
        <dbReference type="ChEBI" id="CHEBI:30616"/>
    </ligand>
</feature>
<feature type="binding site" evidence="1">
    <location>
        <position position="887"/>
    </location>
    <ligand>
        <name>Zn(2+)</name>
        <dbReference type="ChEBI" id="CHEBI:29105"/>
    </ligand>
</feature>
<feature type="binding site" evidence="1">
    <location>
        <position position="889"/>
    </location>
    <ligand>
        <name>Zn(2+)</name>
        <dbReference type="ChEBI" id="CHEBI:29105"/>
    </ligand>
</feature>
<feature type="binding site" evidence="1">
    <location>
        <position position="898"/>
    </location>
    <ligand>
        <name>Zn(2+)</name>
        <dbReference type="ChEBI" id="CHEBI:29105"/>
    </ligand>
</feature>
<feature type="binding site" evidence="1">
    <location>
        <position position="899"/>
    </location>
    <ligand>
        <name>Zn(2+)</name>
        <dbReference type="ChEBI" id="CHEBI:29105"/>
    </ligand>
</feature>
<accession>Q7N156</accession>
<organism>
    <name type="scientific">Photorhabdus laumondii subsp. laumondii (strain DSM 15139 / CIP 105565 / TT01)</name>
    <name type="common">Photorhabdus luminescens subsp. laumondii</name>
    <dbReference type="NCBI Taxonomy" id="243265"/>
    <lineage>
        <taxon>Bacteria</taxon>
        <taxon>Pseudomonadati</taxon>
        <taxon>Pseudomonadota</taxon>
        <taxon>Gammaproteobacteria</taxon>
        <taxon>Enterobacterales</taxon>
        <taxon>Morganellaceae</taxon>
        <taxon>Photorhabdus</taxon>
    </lineage>
</organism>
<name>SECA_PHOLL</name>
<proteinExistence type="inferred from homology"/>
<comment type="function">
    <text evidence="1">Part of the Sec protein translocase complex. Interacts with the SecYEG preprotein conducting channel. Has a central role in coupling the hydrolysis of ATP to the transfer of proteins into and across the cell membrane, serving both as a receptor for the preprotein-SecB complex and as an ATP-driven molecular motor driving the stepwise translocation of polypeptide chains across the membrane.</text>
</comment>
<comment type="catalytic activity">
    <reaction evidence="1">
        <text>ATP + H2O + cellular proteinSide 1 = ADP + phosphate + cellular proteinSide 2.</text>
        <dbReference type="EC" id="7.4.2.8"/>
    </reaction>
</comment>
<comment type="cofactor">
    <cofactor evidence="1">
        <name>Zn(2+)</name>
        <dbReference type="ChEBI" id="CHEBI:29105"/>
    </cofactor>
    <text evidence="1">May bind 1 zinc ion per subunit.</text>
</comment>
<comment type="subunit">
    <text evidence="1">Monomer and homodimer. Part of the essential Sec protein translocation apparatus which comprises SecA, SecYEG and auxiliary proteins SecDF-YajC and YidC.</text>
</comment>
<comment type="subcellular location">
    <subcellularLocation>
        <location evidence="1">Cell inner membrane</location>
        <topology evidence="1">Peripheral membrane protein</topology>
        <orientation evidence="1">Cytoplasmic side</orientation>
    </subcellularLocation>
    <subcellularLocation>
        <location evidence="1">Cytoplasm</location>
    </subcellularLocation>
    <text evidence="1">Distribution is 50-50.</text>
</comment>
<comment type="induction">
    <text evidence="1">Repressed under conditions of excess protein secretion capacity and derepressed when protein secretion becomes limiting. This is regulated by SecM.</text>
</comment>
<comment type="similarity">
    <text evidence="1">Belongs to the SecA family.</text>
</comment>